<accession>P35103</accession>
<keyword id="KW-0042">Antenna complex</keyword>
<keyword id="KW-0076">Bacteriochlorophyll</keyword>
<keyword id="KW-0997">Cell inner membrane</keyword>
<keyword id="KW-1003">Cell membrane</keyword>
<keyword id="KW-0148">Chlorophyll</keyword>
<keyword id="KW-0157">Chromophore</keyword>
<keyword id="KW-0903">Direct protein sequencing</keyword>
<keyword id="KW-0437">Light-harvesting polypeptide</keyword>
<keyword id="KW-0460">Magnesium</keyword>
<keyword id="KW-0472">Membrane</keyword>
<keyword id="KW-0479">Metal-binding</keyword>
<keyword id="KW-0812">Transmembrane</keyword>
<keyword id="KW-1133">Transmembrane helix</keyword>
<evidence type="ECO:0000255" key="1"/>
<evidence type="ECO:0000305" key="2"/>
<comment type="function">
    <text>Antenna complexes are light-harvesting systems, which transfer the excitation energy to the reaction centers.</text>
</comment>
<comment type="subunit">
    <text>The core complex is formed by different alpha and beta chains, binding bacteriochlorophyll molecules, and arranged most probably in tetrameric structures disposed around the reaction center. The non-pigmented gamma chains may constitute additional components.</text>
</comment>
<comment type="subcellular location">
    <subcellularLocation>
        <location>Cell inner membrane</location>
        <topology>Single-pass type II membrane protein</topology>
    </subcellularLocation>
</comment>
<comment type="similarity">
    <text evidence="2">Belongs to the antenna complex alpha subunit family.</text>
</comment>
<sequence length="65" mass="6557">MNQGRIWTVVSPTVGLPLLLGSVAAIAFAVHFAVLENTSWVAAFMNGKSVAAAPAPAAPAAPAKK</sequence>
<feature type="chain" id="PRO_0000099798" description="Light-harvesting protein B-800-850 alpha chain C">
    <location>
        <begin position="1"/>
        <end position="65"/>
    </location>
</feature>
<feature type="topological domain" description="Cytoplasmic" evidence="1">
    <location>
        <begin position="1"/>
        <end position="11"/>
    </location>
</feature>
<feature type="transmembrane region" description="Helical" evidence="1">
    <location>
        <begin position="12"/>
        <end position="35"/>
    </location>
</feature>
<feature type="topological domain" description="Periplasmic" evidence="1">
    <location>
        <begin position="36"/>
        <end position="65"/>
    </location>
</feature>
<feature type="binding site" description="axial binding residue" evidence="1">
    <location>
        <position position="31"/>
    </location>
    <ligand>
        <name>a bacteriochlorophyll</name>
        <dbReference type="ChEBI" id="CHEBI:38201"/>
    </ligand>
    <ligandPart>
        <name>Mg</name>
        <dbReference type="ChEBI" id="CHEBI:25107"/>
    </ligandPart>
</feature>
<name>LHA3_RHOPL</name>
<organism>
    <name type="scientific">Rhodopseudomonas palustris</name>
    <dbReference type="NCBI Taxonomy" id="1076"/>
    <lineage>
        <taxon>Bacteria</taxon>
        <taxon>Pseudomonadati</taxon>
        <taxon>Pseudomonadota</taxon>
        <taxon>Alphaproteobacteria</taxon>
        <taxon>Hyphomicrobiales</taxon>
        <taxon>Nitrobacteraceae</taxon>
        <taxon>Rhodopseudomonas</taxon>
    </lineage>
</organism>
<gene>
    <name type="primary">pucAC</name>
</gene>
<protein>
    <recommendedName>
        <fullName>Light-harvesting protein B-800-850 alpha chain C</fullName>
    </recommendedName>
    <alternativeName>
        <fullName>Antenna pigment protein alpha chain C</fullName>
    </alternativeName>
    <alternativeName>
        <fullName>LH II-C alpha</fullName>
    </alternativeName>
</protein>
<dbReference type="EMBL" id="X64958">
    <property type="protein sequence ID" value="CAA46122.1"/>
    <property type="molecule type" value="Genomic_DNA"/>
</dbReference>
<dbReference type="RefSeq" id="WP_012496487.1">
    <property type="nucleotide sequence ID" value="NZ_NRSI01000001.1"/>
</dbReference>
<dbReference type="SMR" id="P35103"/>
<dbReference type="OMA" id="TMAFLVH"/>
<dbReference type="GO" id="GO:0019866">
    <property type="term" value="C:organelle inner membrane"/>
    <property type="evidence" value="ECO:0007669"/>
    <property type="project" value="InterPro"/>
</dbReference>
<dbReference type="GO" id="GO:0005886">
    <property type="term" value="C:plasma membrane"/>
    <property type="evidence" value="ECO:0007669"/>
    <property type="project" value="UniProtKB-SubCell"/>
</dbReference>
<dbReference type="GO" id="GO:0030077">
    <property type="term" value="C:plasma membrane light-harvesting complex"/>
    <property type="evidence" value="ECO:0007669"/>
    <property type="project" value="InterPro"/>
</dbReference>
<dbReference type="GO" id="GO:0042314">
    <property type="term" value="F:bacteriochlorophyll binding"/>
    <property type="evidence" value="ECO:0007669"/>
    <property type="project" value="UniProtKB-KW"/>
</dbReference>
<dbReference type="GO" id="GO:0045156">
    <property type="term" value="F:electron transporter, transferring electrons within the cyclic electron transport pathway of photosynthesis activity"/>
    <property type="evidence" value="ECO:0007669"/>
    <property type="project" value="InterPro"/>
</dbReference>
<dbReference type="GO" id="GO:0046872">
    <property type="term" value="F:metal ion binding"/>
    <property type="evidence" value="ECO:0007669"/>
    <property type="project" value="UniProtKB-KW"/>
</dbReference>
<dbReference type="GO" id="GO:0019684">
    <property type="term" value="P:photosynthesis, light reaction"/>
    <property type="evidence" value="ECO:0007669"/>
    <property type="project" value="InterPro"/>
</dbReference>
<dbReference type="Gene3D" id="4.10.220.20">
    <property type="entry name" value="Light-harvesting complex"/>
    <property type="match status" value="1"/>
</dbReference>
<dbReference type="InterPro" id="IPR000066">
    <property type="entry name" value="Antenna_a/b"/>
</dbReference>
<dbReference type="InterPro" id="IPR018332">
    <property type="entry name" value="Antenna_alpha"/>
</dbReference>
<dbReference type="InterPro" id="IPR002361">
    <property type="entry name" value="Antenna_alpha_CS"/>
</dbReference>
<dbReference type="InterPro" id="IPR035889">
    <property type="entry name" value="Light-harvesting_complex"/>
</dbReference>
<dbReference type="Pfam" id="PF00556">
    <property type="entry name" value="LHC"/>
    <property type="match status" value="1"/>
</dbReference>
<dbReference type="PRINTS" id="PR00673">
    <property type="entry name" value="LIGHTHARVSTA"/>
</dbReference>
<dbReference type="SUPFAM" id="SSF56918">
    <property type="entry name" value="Light-harvesting complex subunits"/>
    <property type="match status" value="1"/>
</dbReference>
<dbReference type="PROSITE" id="PS00968">
    <property type="entry name" value="ANTENNA_COMP_ALPHA"/>
    <property type="match status" value="1"/>
</dbReference>
<proteinExistence type="evidence at protein level"/>
<reference key="1">
    <citation type="journal article" date="1989" name="EMBO J.">
        <title>Multiple copies of the coding regions for the light-harvesting B800-850 alpha- and beta-polypeptides are present in the Rhodopseudomonas palustris genome.</title>
        <authorList>
            <person name="Tadros M.H."/>
            <person name="Waterkamp K."/>
        </authorList>
    </citation>
    <scope>NUCLEOTIDE SEQUENCE [GENOMIC DNA]</scope>
    <scope>PROTEIN SEQUENCE OF 1-9</scope>
    <source>
        <strain>1E5</strain>
    </source>
</reference>